<gene>
    <name type="primary">pbpG</name>
    <name type="ordered locus">PA0869</name>
</gene>
<sequence length="310" mass="34046">MRNRLLSLVTLFLSLSVATAVSASPPPKAGLPLQQELASGSALVTDQNTGKVLYSRNPDLVVPIASITKLMTAMVVLDSKLPLDEVLPIAISETSEMRGVFSRVRVGSQISRRDMLLLALMSSENRAAASLAQNYPGGKNAFVKAMNAKAHALGMKNTRYVEPTGLSLHNVSTARDLTRLLVASRQYPLLSQWSTTPEKTVAFRHPNYTLGFRNTNHLINNKTWNIQLTKTGFTNEAGHCLVMRTTINRSPVNLVVLDAFGKYTHFADATRLRRWLETGQVTAIPAAAKAYRLQRDRERGLGQPVAQAVR</sequence>
<protein>
    <recommendedName>
        <fullName>D-alanyl-D-alanine endopeptidase</fullName>
        <shortName>DD-endopeptidase</shortName>
        <ecNumber>3.4.21.-</ecNumber>
    </recommendedName>
    <alternativeName>
        <fullName>Penicillin-binding protein 5</fullName>
        <shortName>PBP-5</shortName>
    </alternativeName>
</protein>
<keyword id="KW-0133">Cell shape</keyword>
<keyword id="KW-0961">Cell wall biogenesis/degradation</keyword>
<keyword id="KW-0378">Hydrolase</keyword>
<keyword id="KW-0573">Peptidoglycan synthesis</keyword>
<keyword id="KW-0574">Periplasm</keyword>
<keyword id="KW-1185">Reference proteome</keyword>
<keyword id="KW-0732">Signal</keyword>
<reference key="1">
    <citation type="submission" date="1996-06" db="EMBL/GenBank/DDBJ databases">
        <authorList>
            <person name="Song J."/>
            <person name="Jensen R.A."/>
        </authorList>
    </citation>
    <scope>NUCLEOTIDE SEQUENCE [GENOMIC DNA]</scope>
    <source>
        <strain>ATCC 15692 / DSM 22644 / CIP 104116 / JCM 14847 / LMG 12228 / 1C / PRS 101 / PAO1</strain>
    </source>
</reference>
<reference key="2">
    <citation type="journal article" date="2000" name="Nature">
        <title>Complete genome sequence of Pseudomonas aeruginosa PAO1, an opportunistic pathogen.</title>
        <authorList>
            <person name="Stover C.K."/>
            <person name="Pham X.-Q.T."/>
            <person name="Erwin A.L."/>
            <person name="Mizoguchi S.D."/>
            <person name="Warrener P."/>
            <person name="Hickey M.J."/>
            <person name="Brinkman F.S.L."/>
            <person name="Hufnagle W.O."/>
            <person name="Kowalik D.J."/>
            <person name="Lagrou M."/>
            <person name="Garber R.L."/>
            <person name="Goltry L."/>
            <person name="Tolentino E."/>
            <person name="Westbrock-Wadman S."/>
            <person name="Yuan Y."/>
            <person name="Brody L.L."/>
            <person name="Coulter S.N."/>
            <person name="Folger K.R."/>
            <person name="Kas A."/>
            <person name="Larbig K."/>
            <person name="Lim R.M."/>
            <person name="Smith K.A."/>
            <person name="Spencer D.H."/>
            <person name="Wong G.K.-S."/>
            <person name="Wu Z."/>
            <person name="Paulsen I.T."/>
            <person name="Reizer J."/>
            <person name="Saier M.H. Jr."/>
            <person name="Hancock R.E.W."/>
            <person name="Lory S."/>
            <person name="Olson M.V."/>
        </authorList>
    </citation>
    <scope>NUCLEOTIDE SEQUENCE [LARGE SCALE GENOMIC DNA]</scope>
    <source>
        <strain>ATCC 15692 / DSM 22644 / CIP 104116 / JCM 14847 / LMG 12228 / 1C / PRS 101 / PAO1</strain>
    </source>
</reference>
<evidence type="ECO:0000250" key="1"/>
<evidence type="ECO:0000255" key="2"/>
<evidence type="ECO:0000305" key="3"/>
<accession>P72161</accession>
<comment type="function">
    <text>Cell wall formation.</text>
</comment>
<comment type="subcellular location">
    <subcellularLocation>
        <location evidence="3">Periplasm</location>
    </subcellularLocation>
</comment>
<comment type="similarity">
    <text evidence="3">Belongs to the peptidase S11 family.</text>
</comment>
<organism>
    <name type="scientific">Pseudomonas aeruginosa (strain ATCC 15692 / DSM 22644 / CIP 104116 / JCM 14847 / LMG 12228 / 1C / PRS 101 / PAO1)</name>
    <dbReference type="NCBI Taxonomy" id="208964"/>
    <lineage>
        <taxon>Bacteria</taxon>
        <taxon>Pseudomonadati</taxon>
        <taxon>Pseudomonadota</taxon>
        <taxon>Gammaproteobacteria</taxon>
        <taxon>Pseudomonadales</taxon>
        <taxon>Pseudomonadaceae</taxon>
        <taxon>Pseudomonas</taxon>
    </lineage>
</organism>
<name>PBP5_PSEAE</name>
<feature type="signal peptide" evidence="2">
    <location>
        <begin position="1"/>
        <end position="23"/>
    </location>
</feature>
<feature type="chain" id="PRO_0000027239" description="D-alanyl-D-alanine endopeptidase">
    <location>
        <begin position="24"/>
        <end position="310"/>
    </location>
</feature>
<feature type="active site" description="Acyl-ester intermediate" evidence="1">
    <location>
        <position position="66"/>
    </location>
</feature>
<feature type="active site" description="Proton acceptor" evidence="1">
    <location>
        <position position="69"/>
    </location>
</feature>
<feature type="active site" evidence="1">
    <location>
        <position position="123"/>
    </location>
</feature>
<feature type="binding site" evidence="1">
    <location>
        <position position="230"/>
    </location>
    <ligand>
        <name>substrate</name>
    </ligand>
</feature>
<feature type="sequence conflict" description="In Ref. 1; AAC46341." evidence="3" ref="1">
    <original>D</original>
    <variation>DD</variation>
    <location>
        <position position="296"/>
    </location>
</feature>
<proteinExistence type="inferred from homology"/>
<dbReference type="EC" id="3.4.21.-"/>
<dbReference type="EMBL" id="U62582">
    <property type="protein sequence ID" value="AAC46341.1"/>
    <property type="molecule type" value="Genomic_DNA"/>
</dbReference>
<dbReference type="EMBL" id="AE004091">
    <property type="protein sequence ID" value="AAG04258.1"/>
    <property type="molecule type" value="Genomic_DNA"/>
</dbReference>
<dbReference type="PIR" id="B83538">
    <property type="entry name" value="B83538"/>
</dbReference>
<dbReference type="RefSeq" id="NP_249560.1">
    <property type="nucleotide sequence ID" value="NC_002516.2"/>
</dbReference>
<dbReference type="RefSeq" id="WP_003114239.1">
    <property type="nucleotide sequence ID" value="NZ_QZGE01000007.1"/>
</dbReference>
<dbReference type="SMR" id="P72161"/>
<dbReference type="FunCoup" id="P72161">
    <property type="interactions" value="11"/>
</dbReference>
<dbReference type="STRING" id="208964.PA0869"/>
<dbReference type="MEROPS" id="S11.002"/>
<dbReference type="PaxDb" id="208964-PA0869"/>
<dbReference type="DNASU" id="877694"/>
<dbReference type="GeneID" id="877694"/>
<dbReference type="KEGG" id="pae:PA0869"/>
<dbReference type="PATRIC" id="fig|208964.12.peg.903"/>
<dbReference type="PseudoCAP" id="PA0869"/>
<dbReference type="HOGENOM" id="CLU_027070_0_3_6"/>
<dbReference type="InParanoid" id="P72161"/>
<dbReference type="OrthoDB" id="5688590at2"/>
<dbReference type="PhylomeDB" id="P72161"/>
<dbReference type="BioCyc" id="PAER208964:G1FZ6-884-MONOMER"/>
<dbReference type="Proteomes" id="UP000002438">
    <property type="component" value="Chromosome"/>
</dbReference>
<dbReference type="GO" id="GO:0042597">
    <property type="term" value="C:periplasmic space"/>
    <property type="evidence" value="ECO:0007669"/>
    <property type="project" value="UniProtKB-SubCell"/>
</dbReference>
<dbReference type="GO" id="GO:0009002">
    <property type="term" value="F:serine-type D-Ala-D-Ala carboxypeptidase activity"/>
    <property type="evidence" value="ECO:0000314"/>
    <property type="project" value="CACAO"/>
</dbReference>
<dbReference type="GO" id="GO:0071555">
    <property type="term" value="P:cell wall organization"/>
    <property type="evidence" value="ECO:0007669"/>
    <property type="project" value="UniProtKB-KW"/>
</dbReference>
<dbReference type="GO" id="GO:0009252">
    <property type="term" value="P:peptidoglycan biosynthetic process"/>
    <property type="evidence" value="ECO:0007669"/>
    <property type="project" value="UniProtKB-KW"/>
</dbReference>
<dbReference type="GO" id="GO:0006508">
    <property type="term" value="P:proteolysis"/>
    <property type="evidence" value="ECO:0007669"/>
    <property type="project" value="InterPro"/>
</dbReference>
<dbReference type="GO" id="GO:0008360">
    <property type="term" value="P:regulation of cell shape"/>
    <property type="evidence" value="ECO:0007669"/>
    <property type="project" value="UniProtKB-KW"/>
</dbReference>
<dbReference type="Gene3D" id="3.40.710.10">
    <property type="entry name" value="DD-peptidase/beta-lactamase superfamily"/>
    <property type="match status" value="1"/>
</dbReference>
<dbReference type="InterPro" id="IPR012338">
    <property type="entry name" value="Beta-lactam/transpept-like"/>
</dbReference>
<dbReference type="InterPro" id="IPR018044">
    <property type="entry name" value="Peptidase_S11"/>
</dbReference>
<dbReference type="InterPro" id="IPR001967">
    <property type="entry name" value="Peptidase_S11_N"/>
</dbReference>
<dbReference type="NCBIfam" id="NF008668">
    <property type="entry name" value="PRK11669.1"/>
    <property type="match status" value="1"/>
</dbReference>
<dbReference type="PANTHER" id="PTHR21581">
    <property type="entry name" value="D-ALANYL-D-ALANINE CARBOXYPEPTIDASE"/>
    <property type="match status" value="1"/>
</dbReference>
<dbReference type="PANTHER" id="PTHR21581:SF26">
    <property type="entry name" value="D-ALANYL-D-ALANINE ENDOPEPTIDASE"/>
    <property type="match status" value="1"/>
</dbReference>
<dbReference type="Pfam" id="PF00768">
    <property type="entry name" value="Peptidase_S11"/>
    <property type="match status" value="1"/>
</dbReference>
<dbReference type="PRINTS" id="PR00725">
    <property type="entry name" value="DADACBPTASE1"/>
</dbReference>
<dbReference type="SUPFAM" id="SSF56601">
    <property type="entry name" value="beta-lactamase/transpeptidase-like"/>
    <property type="match status" value="1"/>
</dbReference>